<protein>
    <recommendedName>
        <fullName>Tic20 family protein Ycf60</fullName>
    </recommendedName>
</protein>
<geneLocation type="chloroplast"/>
<organism>
    <name type="scientific">Cyanidioschyzon merolae (strain NIES-3377 / 10D)</name>
    <name type="common">Unicellular red alga</name>
    <dbReference type="NCBI Taxonomy" id="280699"/>
    <lineage>
        <taxon>Eukaryota</taxon>
        <taxon>Rhodophyta</taxon>
        <taxon>Bangiophyceae</taxon>
        <taxon>Cyanidiales</taxon>
        <taxon>Cyanidiaceae</taxon>
        <taxon>Cyanidioschyzon</taxon>
    </lineage>
</organism>
<proteinExistence type="inferred from homology"/>
<accession>Q85G30</accession>
<reference key="1">
    <citation type="journal article" date="2003" name="DNA Res.">
        <title>Complete sequence and analysis of the plastid genome of the unicellular red alga Cyanidioschyzon merolae.</title>
        <authorList>
            <person name="Ohta N."/>
            <person name="Matsuzaki M."/>
            <person name="Misumi O."/>
            <person name="Miyagishima S.-Y."/>
            <person name="Nozaki H."/>
            <person name="Tanaka K."/>
            <person name="Shin-i T."/>
            <person name="Kohara Y."/>
            <person name="Kuroiwa T."/>
        </authorList>
    </citation>
    <scope>NUCLEOTIDE SEQUENCE [LARGE SCALE GENOMIC DNA]</scope>
    <source>
        <strain>NIES-3377 / 10D</strain>
    </source>
</reference>
<gene>
    <name type="primary">ycf60</name>
</gene>
<name>YCF60_CYAM1</name>
<keyword id="KW-0150">Chloroplast</keyword>
<keyword id="KW-0472">Membrane</keyword>
<keyword id="KW-0934">Plastid</keyword>
<keyword id="KW-1185">Reference proteome</keyword>
<keyword id="KW-0812">Transmembrane</keyword>
<keyword id="KW-1133">Transmembrane helix</keyword>
<dbReference type="EMBL" id="AB002583">
    <property type="protein sequence ID" value="BAC76161.1"/>
    <property type="molecule type" value="Genomic_DNA"/>
</dbReference>
<dbReference type="RefSeq" id="NP_848999.1">
    <property type="nucleotide sequence ID" value="NC_004799.1"/>
</dbReference>
<dbReference type="SMR" id="Q85G30"/>
<dbReference type="STRING" id="280699.Q85G30"/>
<dbReference type="EnsemblPlants" id="CMV078CT">
    <property type="protein sequence ID" value="CMV078CT"/>
    <property type="gene ID" value="CMV078C"/>
</dbReference>
<dbReference type="GeneID" id="845088"/>
<dbReference type="Gramene" id="CMV078CT">
    <property type="protein sequence ID" value="CMV078CT"/>
    <property type="gene ID" value="CMV078C"/>
</dbReference>
<dbReference type="KEGG" id="cme:CymeCp067"/>
<dbReference type="HOGENOM" id="CLU_1385969_0_0_1"/>
<dbReference type="Proteomes" id="UP000007014">
    <property type="component" value="Chloroplast"/>
</dbReference>
<dbReference type="GO" id="GO:0031969">
    <property type="term" value="C:chloroplast membrane"/>
    <property type="evidence" value="ECO:0007669"/>
    <property type="project" value="UniProtKB-SubCell"/>
</dbReference>
<dbReference type="InterPro" id="IPR005691">
    <property type="entry name" value="Tic20"/>
</dbReference>
<dbReference type="PANTHER" id="PTHR33510">
    <property type="entry name" value="PROTEIN TIC 20-II, CHLOROPLASTIC"/>
    <property type="match status" value="1"/>
</dbReference>
<dbReference type="PANTHER" id="PTHR33510:SF5">
    <property type="entry name" value="PROTEIN TIC 20-II, CHLOROPLASTIC"/>
    <property type="match status" value="1"/>
</dbReference>
<dbReference type="Pfam" id="PF16166">
    <property type="entry name" value="TIC20"/>
    <property type="match status" value="1"/>
</dbReference>
<sequence length="197" mass="22042">MWIIIASYGVLIIVLAIGIGVGVGVIRKVLKKGMKAEMTIGERMLCFGYYLLPVLECMTHCGPDVLNGWMKGLYKRSLGDLVVVYSTYPILGFMIFFMSYFLLVRGILQVRKKVRFHVSQALIIYLLTSIIGSLLNALPEMILMGWFGSTCLDILFILTMGSVIYASYQVWNGELTRLPLISEAAKLQVQDGEGEKK</sequence>
<comment type="subcellular location">
    <subcellularLocation>
        <location evidence="2">Plastid</location>
        <location evidence="2">Chloroplast membrane</location>
        <topology evidence="2">Multi-pass membrane protein</topology>
    </subcellularLocation>
</comment>
<comment type="similarity">
    <text evidence="2">Belongs to the Tic20 family.</text>
</comment>
<feature type="chain" id="PRO_0000277372" description="Tic20 family protein Ycf60">
    <location>
        <begin position="1"/>
        <end position="197"/>
    </location>
</feature>
<feature type="transmembrane region" description="Helical" evidence="1">
    <location>
        <begin position="3"/>
        <end position="23"/>
    </location>
</feature>
<feature type="transmembrane region" description="Helical" evidence="1">
    <location>
        <begin position="47"/>
        <end position="66"/>
    </location>
</feature>
<feature type="transmembrane region" description="Helical" evidence="1">
    <location>
        <begin position="81"/>
        <end position="101"/>
    </location>
</feature>
<feature type="transmembrane region" description="Helical" evidence="1">
    <location>
        <begin position="118"/>
        <end position="138"/>
    </location>
</feature>
<feature type="transmembrane region" description="Helical" evidence="1">
    <location>
        <begin position="141"/>
        <end position="161"/>
    </location>
</feature>
<evidence type="ECO:0000255" key="1"/>
<evidence type="ECO:0000305" key="2"/>